<accession>A4QKE8</accession>
<protein>
    <recommendedName>
        <fullName evidence="1">Protein Ycf2</fullName>
    </recommendedName>
</protein>
<feature type="chain" id="PRO_0000343759" description="Protein Ycf2">
    <location>
        <begin position="1"/>
        <end position="2290"/>
    </location>
</feature>
<feature type="binding site" evidence="1">
    <location>
        <begin position="1644"/>
        <end position="1651"/>
    </location>
    <ligand>
        <name>ATP</name>
        <dbReference type="ChEBI" id="CHEBI:30616"/>
    </ligand>
</feature>
<gene>
    <name evidence="1" type="primary">ycf2-A</name>
</gene>
<gene>
    <name evidence="1" type="primary">ycf2-B</name>
</gene>
<comment type="function">
    <text evidence="1">Probable ATPase of unknown function. Its presence in a non-photosynthetic plant (Epifagus virginiana) and experiments in tobacco indicate that it has an essential function which is probably not related to photosynthesis.</text>
</comment>
<comment type="subcellular location">
    <subcellularLocation>
        <location evidence="1">Plastid</location>
        <location evidence="1">Chloroplast stroma</location>
    </subcellularLocation>
</comment>
<comment type="similarity">
    <text evidence="1">Belongs to the Ycf2 family.</text>
</comment>
<sequence>MKGHQFKSWIFELREIVREIKNSHYFLDSWTQFDSVGSFIHIFFHQERFRKLLDPRIFSILLLRNSQGSTSNRYFTIKGVVLFVVAALLYRINNRNMVESKNLYLKGLLPIPMNSIGPRNDTSEESFGSSNINRLIVSLLYLTKGKKISESCFRDPKESTWVLPITKKCIMPESNWSSRWWRNWIGKKRDFCCKISNETVAGIDISFKEKDIKYLEFLFVYYMDDPIRKGHDWELFDRLSPSKRRNIINLNSGQLFEILVKDWICYLMFAFREKIPIEVEGFFKQQGAGSTIQSNDIEHVSHLFSRNKWAISLQNCAQFHMWQFHQDLFVSWGKNPHESDFLRKISRENWIWLDNVWLVNKDRFFSKVRNVSSNIQYDSTRSSFVQVTDSSQLNGSSDQFIDPFDSISNEDSEYHYHTLINQREIQQLKERSILWDPSFIQTEGREIESDRFSKYLSGYSSMPRLFTEREKRMNNHLLSEESEEFLGNPTRAIRSFFSDRWSELHLGSNPTERSTRDQKLLKKEQDVSFVPSRRSENKEIVNIFKIITYLQNTVSIHPISSDLGCDMVPKDELDMDSSNKISFLNKNPFFDLFHLFHERKRGGYTLRHDFESEERFQEMADLFTLSITEPDLVYHKGFAFSIDSYGLDQRQFLKEVFNSRDESKKKSLLVLPPIFYEENESFYRRIRKNWVRISCGNYLEDPKRVVFASNNIMEAVNQYRLIRNLIQIQFQYSPYGYIRNVLNRFFLMKIPDRNFEYGIQRDLIGNDTLNHRTIMKDTINQHLSNLKKSQKKWFDPLIFLSRTERSINRDPNAYRYKWSNGSKNFQEHLEHFVSERKSRFQVVFDRLCINQYSIDWSEVIDKKDLSKSLRFFLSKLLRFFLSKLLLFLSKLLLFLSNSLPFFFVSFENIPIHRSEIHIYELKGPNDQLCNQLLESIGLQIVHLKKLKPFLLDDHNTSQKSKFLINGGTISPFLFNKIPKWMIDSFHTRKNRRKSFDNTDSYFSIVSHDQDNWLNPVKPFQRSLLISSFSKANRLRFLNNPHHFCFYCNKRFPFYVEKARLNNSDFTYGQFLTILFIHNKIFSACGGKKKHAFLERDTISPSSIESQVSNIFISNDFPQSGDERYNLYKSFHFPIRSDPLVRRAIYSIADISGTPLIKGQRVNFERTYCQTLSDMNLSDSEEKSLHQYLNFNSNMGLIHTPCSEKYLQRKKRSLCLKKCVDKGQMDRTFQRDSAFSTLSKLNLFQTYMPWFFTWTGYKYLNLIFLDTFSDLLRILSSSQKFVSIFHDIMHGLDISWRILQKKLCLPQRNLISEISSKSLHNLILSEEMIHRNNESSLISTHLRSPNVREVLYSILFLLLVAGYIVRTHLLFVSRAYSELQTEFEKIKSLMIPSYMIELRKLLDRYPTSELNSFWLKNLFLVALEQLGDCLEEIRGSGGNMLWGGDPAYGVKSIRSKKKDLKINFIDIISIIPNPINRITFSRNTRHLSHTSKEIYSLIRKRKNVSGDWIDDKIESWVANSDSIDDKEREFLVQFSTLRAEKRIDQILLSLTHSDHLSKNDSGYQMIEQPGTIYLRYLVDIHKKYLMNYEFNTSCLAERRIFLAHYQTITYSQTSCGANSFHFPSHGKPFSLRLALSPSRSILVIGSIGTGRSYLVKYLATNSYVPFITVFLNKFLDNKPKGFFIDDIDIDDSDDIDASNDIDRELDTELELLTMMNALTMDMMSEIDLFYITLQFELAKAMSPCIIWIPNIHDLDVNESNYLALGLLVNSLSRDCERCSTRNILVIASTHIPQKVDPALIAPNKLNTCIKIRRLLIPQQRKHFFTLSYTRGFHLEKKMFHTNGFESITMGSSARDLVALTNEALSISITQKKSIIDTNTIRSALHRQTWDLRSQVRSVQDHGILFYQIGRAVAQNVLISNCPIDPISIYMKKKSCNEGDSYLYKWYFELGTSMKKFTILLYLLSCSAGSVAQDLWSLPGPDEKNRITSYGFIENDSDLVHGLLEVQGALVGSSRTEKDCSQFDNDRVTLLFRSEPRDPLYMMQDGSCSIVDQRFLYEKYESEFEEGEGEGVLDPQQIEEDLFNHIVWAPRIWRPRGFLFDCIERPNELGFPYLAGSFRGKRIIYDEKYELQENDSEFLQSGTMQYQRRDRSSKEQGFFRISQFIWDPADPLFFLFKDQPFVSVFSHREFFADEEMSKGLLTSQTDPPTSIYKRWFIKNTQEKHFELLIQRQRWLRTNSSLSNGFFRSNTRSESYQYLSNLFLSNGTLLDRMTKTLLKKRWLFPDEMKIGFM</sequence>
<evidence type="ECO:0000255" key="1">
    <source>
        <dbReference type="HAMAP-Rule" id="MF_01330"/>
    </source>
</evidence>
<proteinExistence type="inferred from homology"/>
<reference key="1">
    <citation type="submission" date="2007-03" db="EMBL/GenBank/DDBJ databases">
        <title>Sequencing analysis of Barbarea verna chloroplast DNA.</title>
        <authorList>
            <person name="Hosouchi T."/>
            <person name="Tsuruoka H."/>
            <person name="Kotani H."/>
        </authorList>
    </citation>
    <scope>NUCLEOTIDE SEQUENCE [LARGE SCALE GENOMIC DNA]</scope>
</reference>
<geneLocation type="chloroplast"/>
<organism>
    <name type="scientific">Barbarea verna</name>
    <name type="common">Land cress</name>
    <name type="synonym">Erysimum vernum</name>
    <dbReference type="NCBI Taxonomy" id="50458"/>
    <lineage>
        <taxon>Eukaryota</taxon>
        <taxon>Viridiplantae</taxon>
        <taxon>Streptophyta</taxon>
        <taxon>Embryophyta</taxon>
        <taxon>Tracheophyta</taxon>
        <taxon>Spermatophyta</taxon>
        <taxon>Magnoliopsida</taxon>
        <taxon>eudicotyledons</taxon>
        <taxon>Gunneridae</taxon>
        <taxon>Pentapetalae</taxon>
        <taxon>rosids</taxon>
        <taxon>malvids</taxon>
        <taxon>Brassicales</taxon>
        <taxon>Brassicaceae</taxon>
        <taxon>Cardamineae</taxon>
        <taxon>Barbarea</taxon>
    </lineage>
</organism>
<dbReference type="EMBL" id="AP009370">
    <property type="protein sequence ID" value="BAF50153.1"/>
    <property type="molecule type" value="Genomic_DNA"/>
</dbReference>
<dbReference type="EMBL" id="AP009370">
    <property type="protein sequence ID" value="BAF50174.1"/>
    <property type="molecule type" value="Genomic_DNA"/>
</dbReference>
<dbReference type="GO" id="GO:0009570">
    <property type="term" value="C:chloroplast stroma"/>
    <property type="evidence" value="ECO:0007669"/>
    <property type="project" value="UniProtKB-SubCell"/>
</dbReference>
<dbReference type="GO" id="GO:0005524">
    <property type="term" value="F:ATP binding"/>
    <property type="evidence" value="ECO:0007669"/>
    <property type="project" value="UniProtKB-KW"/>
</dbReference>
<dbReference type="GO" id="GO:0016887">
    <property type="term" value="F:ATP hydrolysis activity"/>
    <property type="evidence" value="ECO:0007669"/>
    <property type="project" value="InterPro"/>
</dbReference>
<dbReference type="CDD" id="cd19505">
    <property type="entry name" value="RecA-like_Ycf2"/>
    <property type="match status" value="1"/>
</dbReference>
<dbReference type="Gene3D" id="3.40.50.300">
    <property type="entry name" value="P-loop containing nucleotide triphosphate hydrolases"/>
    <property type="match status" value="1"/>
</dbReference>
<dbReference type="HAMAP" id="MF_01330">
    <property type="entry name" value="Ycf2"/>
    <property type="match status" value="1"/>
</dbReference>
<dbReference type="InterPro" id="IPR003593">
    <property type="entry name" value="AAA+_ATPase"/>
</dbReference>
<dbReference type="InterPro" id="IPR003959">
    <property type="entry name" value="ATPase_AAA_core"/>
</dbReference>
<dbReference type="InterPro" id="IPR027417">
    <property type="entry name" value="P-loop_NTPase"/>
</dbReference>
<dbReference type="InterPro" id="IPR008543">
    <property type="entry name" value="Uncharacterised_Ycf2"/>
</dbReference>
<dbReference type="InterPro" id="IPR056777">
    <property type="entry name" value="Ycf2_N"/>
</dbReference>
<dbReference type="PANTHER" id="PTHR33078:SF89">
    <property type="entry name" value="PROTEIN YCF2"/>
    <property type="match status" value="1"/>
</dbReference>
<dbReference type="PANTHER" id="PTHR33078">
    <property type="entry name" value="PROTEIN YCF2-RELATED"/>
    <property type="match status" value="1"/>
</dbReference>
<dbReference type="Pfam" id="PF00004">
    <property type="entry name" value="AAA"/>
    <property type="match status" value="1"/>
</dbReference>
<dbReference type="Pfam" id="PF05695">
    <property type="entry name" value="Ycf2"/>
    <property type="match status" value="1"/>
</dbReference>
<dbReference type="SMART" id="SM00382">
    <property type="entry name" value="AAA"/>
    <property type="match status" value="1"/>
</dbReference>
<dbReference type="SUPFAM" id="SSF52540">
    <property type="entry name" value="P-loop containing nucleoside triphosphate hydrolases"/>
    <property type="match status" value="1"/>
</dbReference>
<keyword id="KW-0067">ATP-binding</keyword>
<keyword id="KW-0150">Chloroplast</keyword>
<keyword id="KW-0547">Nucleotide-binding</keyword>
<keyword id="KW-0934">Plastid</keyword>
<name>YCF2_BARVE</name>